<organism>
    <name type="scientific">Staphylococcus aureus (strain COL)</name>
    <dbReference type="NCBI Taxonomy" id="93062"/>
    <lineage>
        <taxon>Bacteria</taxon>
        <taxon>Bacillati</taxon>
        <taxon>Bacillota</taxon>
        <taxon>Bacilli</taxon>
        <taxon>Bacillales</taxon>
        <taxon>Staphylococcaceae</taxon>
        <taxon>Staphylococcus</taxon>
    </lineage>
</organism>
<feature type="chain" id="PRO_0000075201" description="Alanine--tRNA ligase">
    <location>
        <begin position="1"/>
        <end position="876"/>
    </location>
</feature>
<feature type="binding site" evidence="1">
    <location>
        <position position="565"/>
    </location>
    <ligand>
        <name>Zn(2+)</name>
        <dbReference type="ChEBI" id="CHEBI:29105"/>
    </ligand>
</feature>
<feature type="binding site" evidence="1">
    <location>
        <position position="569"/>
    </location>
    <ligand>
        <name>Zn(2+)</name>
        <dbReference type="ChEBI" id="CHEBI:29105"/>
    </ligand>
</feature>
<feature type="binding site" evidence="1">
    <location>
        <position position="667"/>
    </location>
    <ligand>
        <name>Zn(2+)</name>
        <dbReference type="ChEBI" id="CHEBI:29105"/>
    </ligand>
</feature>
<feature type="binding site" evidence="1">
    <location>
        <position position="671"/>
    </location>
    <ligand>
        <name>Zn(2+)</name>
        <dbReference type="ChEBI" id="CHEBI:29105"/>
    </ligand>
</feature>
<gene>
    <name evidence="1" type="primary">alaS</name>
    <name type="ordered locus">SACOL1673</name>
</gene>
<proteinExistence type="inferred from homology"/>
<keyword id="KW-0030">Aminoacyl-tRNA synthetase</keyword>
<keyword id="KW-0067">ATP-binding</keyword>
<keyword id="KW-0963">Cytoplasm</keyword>
<keyword id="KW-0436">Ligase</keyword>
<keyword id="KW-0479">Metal-binding</keyword>
<keyword id="KW-0547">Nucleotide-binding</keyword>
<keyword id="KW-0648">Protein biosynthesis</keyword>
<keyword id="KW-0694">RNA-binding</keyword>
<keyword id="KW-0820">tRNA-binding</keyword>
<keyword id="KW-0862">Zinc</keyword>
<evidence type="ECO:0000255" key="1">
    <source>
        <dbReference type="HAMAP-Rule" id="MF_00036"/>
    </source>
</evidence>
<comment type="function">
    <text evidence="1">Catalyzes the attachment of alanine to tRNA(Ala) in a two-step reaction: alanine is first activated by ATP to form Ala-AMP and then transferred to the acceptor end of tRNA(Ala). Also edits incorrectly charged Ser-tRNA(Ala) and Gly-tRNA(Ala) via its editing domain.</text>
</comment>
<comment type="catalytic activity">
    <reaction evidence="1">
        <text>tRNA(Ala) + L-alanine + ATP = L-alanyl-tRNA(Ala) + AMP + diphosphate</text>
        <dbReference type="Rhea" id="RHEA:12540"/>
        <dbReference type="Rhea" id="RHEA-COMP:9657"/>
        <dbReference type="Rhea" id="RHEA-COMP:9923"/>
        <dbReference type="ChEBI" id="CHEBI:30616"/>
        <dbReference type="ChEBI" id="CHEBI:33019"/>
        <dbReference type="ChEBI" id="CHEBI:57972"/>
        <dbReference type="ChEBI" id="CHEBI:78442"/>
        <dbReference type="ChEBI" id="CHEBI:78497"/>
        <dbReference type="ChEBI" id="CHEBI:456215"/>
        <dbReference type="EC" id="6.1.1.7"/>
    </reaction>
</comment>
<comment type="cofactor">
    <cofactor evidence="1">
        <name>Zn(2+)</name>
        <dbReference type="ChEBI" id="CHEBI:29105"/>
    </cofactor>
    <text evidence="1">Binds 1 zinc ion per subunit.</text>
</comment>
<comment type="subcellular location">
    <subcellularLocation>
        <location evidence="1">Cytoplasm</location>
    </subcellularLocation>
</comment>
<comment type="domain">
    <text evidence="1">Consists of three domains; the N-terminal catalytic domain, the editing domain and the C-terminal C-Ala domain. The editing domain removes incorrectly charged amino acids, while the C-Ala domain, along with tRNA(Ala), serves as a bridge to cooperatively bring together the editing and aminoacylation centers thus stimulating deacylation of misacylated tRNAs.</text>
</comment>
<comment type="similarity">
    <text evidence="1">Belongs to the class-II aminoacyl-tRNA synthetase family.</text>
</comment>
<accession>Q5HFE4</accession>
<reference key="1">
    <citation type="journal article" date="2005" name="J. Bacteriol.">
        <title>Insights on evolution of virulence and resistance from the complete genome analysis of an early methicillin-resistant Staphylococcus aureus strain and a biofilm-producing methicillin-resistant Staphylococcus epidermidis strain.</title>
        <authorList>
            <person name="Gill S.R."/>
            <person name="Fouts D.E."/>
            <person name="Archer G.L."/>
            <person name="Mongodin E.F."/>
            <person name="DeBoy R.T."/>
            <person name="Ravel J."/>
            <person name="Paulsen I.T."/>
            <person name="Kolonay J.F."/>
            <person name="Brinkac L.M."/>
            <person name="Beanan M.J."/>
            <person name="Dodson R.J."/>
            <person name="Daugherty S.C."/>
            <person name="Madupu R."/>
            <person name="Angiuoli S.V."/>
            <person name="Durkin A.S."/>
            <person name="Haft D.H."/>
            <person name="Vamathevan J.J."/>
            <person name="Khouri H."/>
            <person name="Utterback T.R."/>
            <person name="Lee C."/>
            <person name="Dimitrov G."/>
            <person name="Jiang L."/>
            <person name="Qin H."/>
            <person name="Weidman J."/>
            <person name="Tran K."/>
            <person name="Kang K.H."/>
            <person name="Hance I.R."/>
            <person name="Nelson K.E."/>
            <person name="Fraser C.M."/>
        </authorList>
    </citation>
    <scope>NUCLEOTIDE SEQUENCE [LARGE SCALE GENOMIC DNA]</scope>
    <source>
        <strain>COL</strain>
    </source>
</reference>
<protein>
    <recommendedName>
        <fullName evidence="1">Alanine--tRNA ligase</fullName>
        <ecNumber evidence="1">6.1.1.7</ecNumber>
    </recommendedName>
    <alternativeName>
        <fullName evidence="1">Alanyl-tRNA synthetase</fullName>
        <shortName evidence="1">AlaRS</shortName>
    </alternativeName>
</protein>
<name>SYA_STAAC</name>
<dbReference type="EC" id="6.1.1.7" evidence="1"/>
<dbReference type="EMBL" id="CP000046">
    <property type="protein sequence ID" value="AAW36780.1"/>
    <property type="molecule type" value="Genomic_DNA"/>
</dbReference>
<dbReference type="RefSeq" id="WP_000734064.1">
    <property type="nucleotide sequence ID" value="NZ_JBGOFO010000003.1"/>
</dbReference>
<dbReference type="SMR" id="Q5HFE4"/>
<dbReference type="KEGG" id="sac:SACOL1673"/>
<dbReference type="HOGENOM" id="CLU_004485_1_1_9"/>
<dbReference type="Proteomes" id="UP000000530">
    <property type="component" value="Chromosome"/>
</dbReference>
<dbReference type="GO" id="GO:0005829">
    <property type="term" value="C:cytosol"/>
    <property type="evidence" value="ECO:0007669"/>
    <property type="project" value="TreeGrafter"/>
</dbReference>
<dbReference type="GO" id="GO:0004813">
    <property type="term" value="F:alanine-tRNA ligase activity"/>
    <property type="evidence" value="ECO:0007669"/>
    <property type="project" value="UniProtKB-UniRule"/>
</dbReference>
<dbReference type="GO" id="GO:0002161">
    <property type="term" value="F:aminoacyl-tRNA deacylase activity"/>
    <property type="evidence" value="ECO:0007669"/>
    <property type="project" value="TreeGrafter"/>
</dbReference>
<dbReference type="GO" id="GO:0005524">
    <property type="term" value="F:ATP binding"/>
    <property type="evidence" value="ECO:0007669"/>
    <property type="project" value="UniProtKB-UniRule"/>
</dbReference>
<dbReference type="GO" id="GO:0140096">
    <property type="term" value="F:catalytic activity, acting on a protein"/>
    <property type="evidence" value="ECO:0007669"/>
    <property type="project" value="UniProtKB-ARBA"/>
</dbReference>
<dbReference type="GO" id="GO:0016740">
    <property type="term" value="F:transferase activity"/>
    <property type="evidence" value="ECO:0007669"/>
    <property type="project" value="UniProtKB-ARBA"/>
</dbReference>
<dbReference type="GO" id="GO:0000049">
    <property type="term" value="F:tRNA binding"/>
    <property type="evidence" value="ECO:0007669"/>
    <property type="project" value="UniProtKB-KW"/>
</dbReference>
<dbReference type="GO" id="GO:0008270">
    <property type="term" value="F:zinc ion binding"/>
    <property type="evidence" value="ECO:0007669"/>
    <property type="project" value="UniProtKB-UniRule"/>
</dbReference>
<dbReference type="GO" id="GO:0006419">
    <property type="term" value="P:alanyl-tRNA aminoacylation"/>
    <property type="evidence" value="ECO:0007669"/>
    <property type="project" value="UniProtKB-UniRule"/>
</dbReference>
<dbReference type="CDD" id="cd00673">
    <property type="entry name" value="AlaRS_core"/>
    <property type="match status" value="1"/>
</dbReference>
<dbReference type="FunFam" id="2.40.30.130:FF:000001">
    <property type="entry name" value="Alanine--tRNA ligase"/>
    <property type="match status" value="1"/>
</dbReference>
<dbReference type="FunFam" id="3.10.310.40:FF:000001">
    <property type="entry name" value="Alanine--tRNA ligase"/>
    <property type="match status" value="1"/>
</dbReference>
<dbReference type="FunFam" id="3.30.54.20:FF:000001">
    <property type="entry name" value="Alanine--tRNA ligase"/>
    <property type="match status" value="1"/>
</dbReference>
<dbReference type="FunFam" id="3.30.930.10:FF:000046">
    <property type="entry name" value="Alanine--tRNA ligase"/>
    <property type="match status" value="1"/>
</dbReference>
<dbReference type="FunFam" id="3.30.980.10:FF:000004">
    <property type="entry name" value="Alanine--tRNA ligase, cytoplasmic"/>
    <property type="match status" value="1"/>
</dbReference>
<dbReference type="Gene3D" id="2.40.30.130">
    <property type="match status" value="1"/>
</dbReference>
<dbReference type="Gene3D" id="3.10.310.40">
    <property type="match status" value="1"/>
</dbReference>
<dbReference type="Gene3D" id="3.30.54.20">
    <property type="match status" value="1"/>
</dbReference>
<dbReference type="Gene3D" id="3.30.930.10">
    <property type="entry name" value="Bira Bifunctional Protein, Domain 2"/>
    <property type="match status" value="1"/>
</dbReference>
<dbReference type="Gene3D" id="3.30.980.10">
    <property type="entry name" value="Threonyl-trna Synthetase, Chain A, domain 2"/>
    <property type="match status" value="1"/>
</dbReference>
<dbReference type="HAMAP" id="MF_00036_B">
    <property type="entry name" value="Ala_tRNA_synth_B"/>
    <property type="match status" value="1"/>
</dbReference>
<dbReference type="InterPro" id="IPR045864">
    <property type="entry name" value="aa-tRNA-synth_II/BPL/LPL"/>
</dbReference>
<dbReference type="InterPro" id="IPR002318">
    <property type="entry name" value="Ala-tRNA-lgiase_IIc"/>
</dbReference>
<dbReference type="InterPro" id="IPR018162">
    <property type="entry name" value="Ala-tRNA-ligase_IIc_anticod-bd"/>
</dbReference>
<dbReference type="InterPro" id="IPR018165">
    <property type="entry name" value="Ala-tRNA-synth_IIc_core"/>
</dbReference>
<dbReference type="InterPro" id="IPR018164">
    <property type="entry name" value="Ala-tRNA-synth_IIc_N"/>
</dbReference>
<dbReference type="InterPro" id="IPR050058">
    <property type="entry name" value="Ala-tRNA_ligase"/>
</dbReference>
<dbReference type="InterPro" id="IPR023033">
    <property type="entry name" value="Ala_tRNA_ligase_euk/bac"/>
</dbReference>
<dbReference type="InterPro" id="IPR003156">
    <property type="entry name" value="DHHA1_dom"/>
</dbReference>
<dbReference type="InterPro" id="IPR018163">
    <property type="entry name" value="Thr/Ala-tRNA-synth_IIc_edit"/>
</dbReference>
<dbReference type="InterPro" id="IPR009000">
    <property type="entry name" value="Transl_B-barrel_sf"/>
</dbReference>
<dbReference type="InterPro" id="IPR012947">
    <property type="entry name" value="tRNA_SAD"/>
</dbReference>
<dbReference type="NCBIfam" id="TIGR00344">
    <property type="entry name" value="alaS"/>
    <property type="match status" value="1"/>
</dbReference>
<dbReference type="PANTHER" id="PTHR11777:SF9">
    <property type="entry name" value="ALANINE--TRNA LIGASE, CYTOPLASMIC"/>
    <property type="match status" value="1"/>
</dbReference>
<dbReference type="PANTHER" id="PTHR11777">
    <property type="entry name" value="ALANYL-TRNA SYNTHETASE"/>
    <property type="match status" value="1"/>
</dbReference>
<dbReference type="Pfam" id="PF02272">
    <property type="entry name" value="DHHA1"/>
    <property type="match status" value="1"/>
</dbReference>
<dbReference type="Pfam" id="PF01411">
    <property type="entry name" value="tRNA-synt_2c"/>
    <property type="match status" value="1"/>
</dbReference>
<dbReference type="Pfam" id="PF07973">
    <property type="entry name" value="tRNA_SAD"/>
    <property type="match status" value="1"/>
</dbReference>
<dbReference type="PRINTS" id="PR00980">
    <property type="entry name" value="TRNASYNTHALA"/>
</dbReference>
<dbReference type="SMART" id="SM00863">
    <property type="entry name" value="tRNA_SAD"/>
    <property type="match status" value="1"/>
</dbReference>
<dbReference type="SUPFAM" id="SSF55681">
    <property type="entry name" value="Class II aaRS and biotin synthetases"/>
    <property type="match status" value="1"/>
</dbReference>
<dbReference type="SUPFAM" id="SSF101353">
    <property type="entry name" value="Putative anticodon-binding domain of alanyl-tRNA synthetase (AlaRS)"/>
    <property type="match status" value="1"/>
</dbReference>
<dbReference type="SUPFAM" id="SSF55186">
    <property type="entry name" value="ThrRS/AlaRS common domain"/>
    <property type="match status" value="1"/>
</dbReference>
<dbReference type="SUPFAM" id="SSF50447">
    <property type="entry name" value="Translation proteins"/>
    <property type="match status" value="1"/>
</dbReference>
<dbReference type="PROSITE" id="PS50860">
    <property type="entry name" value="AA_TRNA_LIGASE_II_ALA"/>
    <property type="match status" value="1"/>
</dbReference>
<sequence>MKKLKASEIRQKYLDFFVEKGHMVEPSAPLVPIDDDTLLWINSGVATLKKYFDGRETPKKPRIVNSQKAIRTNDIENVGFTARHHTFFEMLGNFSIGDYFKQEAIEFAWEFLTSDKWMGMEPDKLYVTIHPEDMEAYNIWHKDIGLEESRIIRIEGNFWDIGEGPSGPNTEIFYDRGEAYGQDDPAEEMYPGGENERYLEVWNLVFSEFNHNKDHSYTPLPNKNIDTGMGLERMASVSQNVRTNYETDLFMPIMNEIEKVSGKQYLVNNEQDVAFKVIADHIRTIAFAISDGALPANEGRGYVLRRLLRRAVRFSQTLGINEPFMYKLVDIVADIMEPYYPNVKEKADFIKRVIKSEEERFHETLEDGLAILNELIKKAKATTNEINGKDAFKLYDTYGFPIELTEEIAVQAGLKVDMTTFESEMQQQRDRARQARQNSQSMQVQSEVLKNITSASTFVGYDTATAQTTLTHLIYNGEEVSQVEAGETVYFMLTETPFYAISGGQVADTGIVYNDNFEIAVSEVTKAPNGQNLHKGVVQFGQVNVGATVSAEVNQNDRRDIQKNHSATHLLHAALKSVLGDHVNQAGSLVEADRLRFDFSHFGPMTNDEIDQVERLVNEEIWKGIDVNIQEMDIASAKEMGAMALFGEKYGDVVRVVNMAPFSIELCGGIHVRNTSEIGLFKIVSESGTGAGVRRIEALTGKAAFLYLEDIQEKFNTMKSQLKVKSDDQVVDKLTQLQDEEKALLKQLEQRDKEITSLKMGNIEDQVEEINGYKVLVTEVDVPNAKAIRSTMDDFKSKLQDTIIILASNVDDKVSMVATVPKSLTNNVKAGDLIKQMAPIVGGKGGGRPDMAQGGGTQPENISKSLSFIKDYIKNL</sequence>